<comment type="function">
    <text evidence="1">Molecular scaffold for [Fe-S] cluster assembly of mitochondrial iron-sulfur proteins.</text>
</comment>
<comment type="subcellular location">
    <subcellularLocation>
        <location evidence="2">Mitochondrion</location>
    </subcellularLocation>
</comment>
<comment type="similarity">
    <text evidence="4">Belongs to the NifU family.</text>
</comment>
<protein>
    <recommendedName>
        <fullName evidence="1">NFU1 iron-sulfur cluster scaffold homolog, mitochondrial</fullName>
    </recommendedName>
</protein>
<sequence length="289" mass="31729">MAKLISYAKGGFLRNTRLTSRAVPQVYQHATSSRGFVHLTSSVAQSSAIHVSTPSTPSLMLIMGKRTMFIQTQDTPNPESLKFLPGVEVLGKGNTYDFPSVAAAHCSPLAKLLFRVEGVRSVFFGSDFITISKEEAAEWGLIKPEVFAVIMDFFASGLPILHEARNNADTEILEDDDETVMMIKELLDTRIRPTVQEDGGDIVFMSYDNGVVKLKMQGSCSSCPSSIVTLKNGVQNMLQFYIPEVESVEQVFDEADKMADKEFERFERNLKQKDTSSTAPVGIGGGPAN</sequence>
<proteinExistence type="inferred from homology"/>
<keyword id="KW-0408">Iron</keyword>
<keyword id="KW-0411">Iron-sulfur</keyword>
<keyword id="KW-0479">Metal-binding</keyword>
<keyword id="KW-0496">Mitochondrion</keyword>
<keyword id="KW-1185">Reference proteome</keyword>
<keyword id="KW-0809">Transit peptide</keyword>
<evidence type="ECO:0000250" key="1">
    <source>
        <dbReference type="UniProtKB" id="Q9UMS0"/>
    </source>
</evidence>
<evidence type="ECO:0000255" key="2"/>
<evidence type="ECO:0000256" key="3">
    <source>
        <dbReference type="SAM" id="MobiDB-lite"/>
    </source>
</evidence>
<evidence type="ECO:0000305" key="4"/>
<evidence type="ECO:0000312" key="5">
    <source>
        <dbReference type="EMBL" id="EDW82062.1"/>
    </source>
</evidence>
<dbReference type="EMBL" id="CH964239">
    <property type="protein sequence ID" value="EDW82062.1"/>
    <property type="molecule type" value="Genomic_DNA"/>
</dbReference>
<dbReference type="SMR" id="B4NE93"/>
<dbReference type="STRING" id="7260.B4NE93"/>
<dbReference type="EnsemblMetazoa" id="FBtr0256255">
    <property type="protein sequence ID" value="FBpp0254747"/>
    <property type="gene ID" value="FBgn0227563"/>
</dbReference>
<dbReference type="EnsemblMetazoa" id="XM_002071040.4">
    <property type="protein sequence ID" value="XP_002071076.2"/>
    <property type="gene ID" value="LOC6648753"/>
</dbReference>
<dbReference type="GeneID" id="6648753"/>
<dbReference type="KEGG" id="dwi:6648753"/>
<dbReference type="eggNOG" id="KOG2358">
    <property type="taxonomic scope" value="Eukaryota"/>
</dbReference>
<dbReference type="HOGENOM" id="CLU_060555_0_2_1"/>
<dbReference type="OMA" id="AIMEHYM"/>
<dbReference type="OrthoDB" id="565552at2759"/>
<dbReference type="PhylomeDB" id="B4NE93"/>
<dbReference type="Proteomes" id="UP000007798">
    <property type="component" value="Unassembled WGS sequence"/>
</dbReference>
<dbReference type="GO" id="GO:0005739">
    <property type="term" value="C:mitochondrion"/>
    <property type="evidence" value="ECO:0007669"/>
    <property type="project" value="UniProtKB-SubCell"/>
</dbReference>
<dbReference type="GO" id="GO:0005506">
    <property type="term" value="F:iron ion binding"/>
    <property type="evidence" value="ECO:0007669"/>
    <property type="project" value="InterPro"/>
</dbReference>
<dbReference type="GO" id="GO:0051536">
    <property type="term" value="F:iron-sulfur cluster binding"/>
    <property type="evidence" value="ECO:0007669"/>
    <property type="project" value="UniProtKB-KW"/>
</dbReference>
<dbReference type="GO" id="GO:0016226">
    <property type="term" value="P:iron-sulfur cluster assembly"/>
    <property type="evidence" value="ECO:0007669"/>
    <property type="project" value="InterPro"/>
</dbReference>
<dbReference type="FunFam" id="3.30.300.130:FF:000001">
    <property type="entry name" value="NFU1 iron-sulfur cluster scaffold"/>
    <property type="match status" value="1"/>
</dbReference>
<dbReference type="FunFam" id="3.30.1370.70:FF:000002">
    <property type="entry name" value="NFU1 iron-sulfur cluster scaffold homolog, mitochondrial"/>
    <property type="match status" value="1"/>
</dbReference>
<dbReference type="Gene3D" id="3.30.300.130">
    <property type="entry name" value="Fe-S cluster assembly (FSCA)"/>
    <property type="match status" value="1"/>
</dbReference>
<dbReference type="Gene3D" id="3.30.1370.70">
    <property type="entry name" value="Scaffold protein Nfu/NifU, N-terminal domain"/>
    <property type="match status" value="1"/>
</dbReference>
<dbReference type="InterPro" id="IPR034904">
    <property type="entry name" value="FSCA_dom_sf"/>
</dbReference>
<dbReference type="InterPro" id="IPR014824">
    <property type="entry name" value="Nfu/NifU_N"/>
</dbReference>
<dbReference type="InterPro" id="IPR036498">
    <property type="entry name" value="Nfu/NifU_N_sf"/>
</dbReference>
<dbReference type="InterPro" id="IPR035433">
    <property type="entry name" value="NFU1-like"/>
</dbReference>
<dbReference type="InterPro" id="IPR001075">
    <property type="entry name" value="NIF_FeS_clus_asmbl_NifU_C"/>
</dbReference>
<dbReference type="PANTHER" id="PTHR11178">
    <property type="entry name" value="IRON-SULFUR CLUSTER SCAFFOLD PROTEIN NFU-RELATED"/>
    <property type="match status" value="1"/>
</dbReference>
<dbReference type="PANTHER" id="PTHR11178:SF1">
    <property type="entry name" value="NFU1 IRON-SULFUR CLUSTER SCAFFOLD HOMOLOG, MITOCHONDRIAL"/>
    <property type="match status" value="1"/>
</dbReference>
<dbReference type="Pfam" id="PF08712">
    <property type="entry name" value="Nfu_N"/>
    <property type="match status" value="1"/>
</dbReference>
<dbReference type="Pfam" id="PF01106">
    <property type="entry name" value="NifU"/>
    <property type="match status" value="1"/>
</dbReference>
<dbReference type="PIRSF" id="PIRSF036773">
    <property type="entry name" value="HIRIP5"/>
    <property type="match status" value="1"/>
</dbReference>
<dbReference type="SMART" id="SM00932">
    <property type="entry name" value="Nfu_N"/>
    <property type="match status" value="1"/>
</dbReference>
<dbReference type="SUPFAM" id="SSF117916">
    <property type="entry name" value="Fe-S cluster assembly (FSCA) domain-like"/>
    <property type="match status" value="1"/>
</dbReference>
<dbReference type="SUPFAM" id="SSF110836">
    <property type="entry name" value="Hypothetical protein SAV1430"/>
    <property type="match status" value="1"/>
</dbReference>
<name>NFU1_DROWI</name>
<reference evidence="5" key="1">
    <citation type="journal article" date="2007" name="Nature">
        <title>Evolution of genes and genomes on the Drosophila phylogeny.</title>
        <authorList>
            <consortium name="Drosophila 12 genomes consortium"/>
        </authorList>
    </citation>
    <scope>NUCLEOTIDE SEQUENCE [LARGE SCALE GENOMIC DNA]</scope>
    <source>
        <strain evidence="5">Tucson 14030-0811.24</strain>
    </source>
</reference>
<accession>B4NE93</accession>
<gene>
    <name type="ORF">GK25604</name>
</gene>
<feature type="transit peptide" description="Mitochondrion" evidence="2">
    <location>
        <begin position="1"/>
        <end position="56"/>
    </location>
</feature>
<feature type="chain" id="PRO_0000388704" description="NFU1 iron-sulfur cluster scaffold homolog, mitochondrial" evidence="2">
    <location>
        <begin position="57"/>
        <end position="289"/>
    </location>
</feature>
<feature type="region of interest" description="NifU" evidence="2">
    <location>
        <begin position="183"/>
        <end position="251"/>
    </location>
</feature>
<feature type="region of interest" description="Disordered" evidence="3">
    <location>
        <begin position="267"/>
        <end position="289"/>
    </location>
</feature>
<feature type="binding site" evidence="1">
    <location>
        <position position="220"/>
    </location>
    <ligand>
        <name>[4Fe-4S] cluster</name>
        <dbReference type="ChEBI" id="CHEBI:49883"/>
        <note>ligand shared between dimeric partners</note>
    </ligand>
</feature>
<feature type="binding site" evidence="1">
    <location>
        <position position="223"/>
    </location>
    <ligand>
        <name>[4Fe-4S] cluster</name>
        <dbReference type="ChEBI" id="CHEBI:49883"/>
        <note>ligand shared between dimeric partners</note>
    </ligand>
</feature>
<organism>
    <name type="scientific">Drosophila willistoni</name>
    <name type="common">Fruit fly</name>
    <dbReference type="NCBI Taxonomy" id="7260"/>
    <lineage>
        <taxon>Eukaryota</taxon>
        <taxon>Metazoa</taxon>
        <taxon>Ecdysozoa</taxon>
        <taxon>Arthropoda</taxon>
        <taxon>Hexapoda</taxon>
        <taxon>Insecta</taxon>
        <taxon>Pterygota</taxon>
        <taxon>Neoptera</taxon>
        <taxon>Endopterygota</taxon>
        <taxon>Diptera</taxon>
        <taxon>Brachycera</taxon>
        <taxon>Muscomorpha</taxon>
        <taxon>Ephydroidea</taxon>
        <taxon>Drosophilidae</taxon>
        <taxon>Drosophila</taxon>
        <taxon>Sophophora</taxon>
    </lineage>
</organism>